<reference key="1">
    <citation type="journal article" date="2004" name="Proc. Natl. Acad. Sci. U.S.A.">
        <title>Insights into the evolution of Yersinia pestis through whole-genome comparison with Yersinia pseudotuberculosis.</title>
        <authorList>
            <person name="Chain P.S.G."/>
            <person name="Carniel E."/>
            <person name="Larimer F.W."/>
            <person name="Lamerdin J."/>
            <person name="Stoutland P.O."/>
            <person name="Regala W.M."/>
            <person name="Georgescu A.M."/>
            <person name="Vergez L.M."/>
            <person name="Land M.L."/>
            <person name="Motin V.L."/>
            <person name="Brubaker R.R."/>
            <person name="Fowler J."/>
            <person name="Hinnebusch J."/>
            <person name="Marceau M."/>
            <person name="Medigue C."/>
            <person name="Simonet M."/>
            <person name="Chenal-Francisque V."/>
            <person name="Souza B."/>
            <person name="Dacheux D."/>
            <person name="Elliott J.M."/>
            <person name="Derbise A."/>
            <person name="Hauser L.J."/>
            <person name="Garcia E."/>
        </authorList>
    </citation>
    <scope>NUCLEOTIDE SEQUENCE [LARGE SCALE GENOMIC DNA]</scope>
    <source>
        <strain>IP32953</strain>
    </source>
</reference>
<evidence type="ECO:0000255" key="1">
    <source>
        <dbReference type="HAMAP-Rule" id="MF_00114"/>
    </source>
</evidence>
<feature type="chain" id="PRO_0000231574" description="Deoxyribose-phosphate aldolase 1">
    <location>
        <begin position="1"/>
        <end position="223"/>
    </location>
</feature>
<feature type="active site" description="Proton donor/acceptor" evidence="1">
    <location>
        <position position="91"/>
    </location>
</feature>
<feature type="active site" description="Schiff-base intermediate with acetaldehyde" evidence="1">
    <location>
        <position position="153"/>
    </location>
</feature>
<feature type="active site" description="Proton donor/acceptor" evidence="1">
    <location>
        <position position="182"/>
    </location>
</feature>
<dbReference type="EC" id="4.1.2.4" evidence="1"/>
<dbReference type="EMBL" id="BX936398">
    <property type="protein sequence ID" value="CAH20594.1"/>
    <property type="molecule type" value="Genomic_DNA"/>
</dbReference>
<dbReference type="SMR" id="Q66CP8"/>
<dbReference type="KEGG" id="ypo:BZ17_1165"/>
<dbReference type="KEGG" id="yps:YPTB1354"/>
<dbReference type="PATRIC" id="fig|273123.14.peg.1242"/>
<dbReference type="UniPathway" id="UPA00002">
    <property type="reaction ID" value="UER00468"/>
</dbReference>
<dbReference type="Proteomes" id="UP000001011">
    <property type="component" value="Chromosome"/>
</dbReference>
<dbReference type="GO" id="GO:0005737">
    <property type="term" value="C:cytoplasm"/>
    <property type="evidence" value="ECO:0007669"/>
    <property type="project" value="UniProtKB-SubCell"/>
</dbReference>
<dbReference type="GO" id="GO:0004139">
    <property type="term" value="F:deoxyribose-phosphate aldolase activity"/>
    <property type="evidence" value="ECO:0007669"/>
    <property type="project" value="UniProtKB-UniRule"/>
</dbReference>
<dbReference type="GO" id="GO:0006018">
    <property type="term" value="P:2-deoxyribose 1-phosphate catabolic process"/>
    <property type="evidence" value="ECO:0007669"/>
    <property type="project" value="UniProtKB-UniRule"/>
</dbReference>
<dbReference type="GO" id="GO:0016052">
    <property type="term" value="P:carbohydrate catabolic process"/>
    <property type="evidence" value="ECO:0007669"/>
    <property type="project" value="TreeGrafter"/>
</dbReference>
<dbReference type="GO" id="GO:0009264">
    <property type="term" value="P:deoxyribonucleotide catabolic process"/>
    <property type="evidence" value="ECO:0007669"/>
    <property type="project" value="InterPro"/>
</dbReference>
<dbReference type="CDD" id="cd00959">
    <property type="entry name" value="DeoC"/>
    <property type="match status" value="1"/>
</dbReference>
<dbReference type="FunFam" id="3.20.20.70:FF:000044">
    <property type="entry name" value="Deoxyribose-phosphate aldolase"/>
    <property type="match status" value="1"/>
</dbReference>
<dbReference type="Gene3D" id="3.20.20.70">
    <property type="entry name" value="Aldolase class I"/>
    <property type="match status" value="1"/>
</dbReference>
<dbReference type="HAMAP" id="MF_00114">
    <property type="entry name" value="DeoC_type1"/>
    <property type="match status" value="1"/>
</dbReference>
<dbReference type="InterPro" id="IPR013785">
    <property type="entry name" value="Aldolase_TIM"/>
</dbReference>
<dbReference type="InterPro" id="IPR011343">
    <property type="entry name" value="DeoC"/>
</dbReference>
<dbReference type="InterPro" id="IPR002915">
    <property type="entry name" value="DeoC/FbaB/LacD_aldolase"/>
</dbReference>
<dbReference type="InterPro" id="IPR028581">
    <property type="entry name" value="DeoC_typeI"/>
</dbReference>
<dbReference type="NCBIfam" id="TIGR00126">
    <property type="entry name" value="deoC"/>
    <property type="match status" value="1"/>
</dbReference>
<dbReference type="PANTHER" id="PTHR10889">
    <property type="entry name" value="DEOXYRIBOSE-PHOSPHATE ALDOLASE"/>
    <property type="match status" value="1"/>
</dbReference>
<dbReference type="PANTHER" id="PTHR10889:SF1">
    <property type="entry name" value="DEOXYRIBOSE-PHOSPHATE ALDOLASE"/>
    <property type="match status" value="1"/>
</dbReference>
<dbReference type="Pfam" id="PF01791">
    <property type="entry name" value="DeoC"/>
    <property type="match status" value="1"/>
</dbReference>
<dbReference type="PIRSF" id="PIRSF001357">
    <property type="entry name" value="DeoC"/>
    <property type="match status" value="1"/>
</dbReference>
<dbReference type="SMART" id="SM01133">
    <property type="entry name" value="DeoC"/>
    <property type="match status" value="1"/>
</dbReference>
<dbReference type="SUPFAM" id="SSF51569">
    <property type="entry name" value="Aldolase"/>
    <property type="match status" value="1"/>
</dbReference>
<organism>
    <name type="scientific">Yersinia pseudotuberculosis serotype I (strain IP32953)</name>
    <dbReference type="NCBI Taxonomy" id="273123"/>
    <lineage>
        <taxon>Bacteria</taxon>
        <taxon>Pseudomonadati</taxon>
        <taxon>Pseudomonadota</taxon>
        <taxon>Gammaproteobacteria</taxon>
        <taxon>Enterobacterales</taxon>
        <taxon>Yersiniaceae</taxon>
        <taxon>Yersinia</taxon>
    </lineage>
</organism>
<sequence>MTTNYAHYIDHTLLAMDATEAQIIKLCEEAKQHHFYAVCVNSGYVPVAAQQLAGSSVKVCSVIGFPLGAGLTAAKAFEAQAAINAGAQEIDMVINVGWLKSGKIADVKADIKAVRDNCAATPLKVILETCLLSDEQIVQVCEMCRELDVAFVKTSTGFSTGGAKEEHVKLMRATVGPVMGVKASGAVRDRATAETMIQAGATRIGTSSGVAIVSGQQAAASGY</sequence>
<comment type="function">
    <text evidence="1">Catalyzes a reversible aldol reaction between acetaldehyde and D-glyceraldehyde 3-phosphate to generate 2-deoxy-D-ribose 5-phosphate.</text>
</comment>
<comment type="catalytic activity">
    <reaction evidence="1">
        <text>2-deoxy-D-ribose 5-phosphate = D-glyceraldehyde 3-phosphate + acetaldehyde</text>
        <dbReference type="Rhea" id="RHEA:12821"/>
        <dbReference type="ChEBI" id="CHEBI:15343"/>
        <dbReference type="ChEBI" id="CHEBI:59776"/>
        <dbReference type="ChEBI" id="CHEBI:62877"/>
        <dbReference type="EC" id="4.1.2.4"/>
    </reaction>
</comment>
<comment type="pathway">
    <text evidence="1">Carbohydrate degradation; 2-deoxy-D-ribose 1-phosphate degradation; D-glyceraldehyde 3-phosphate and acetaldehyde from 2-deoxy-alpha-D-ribose 1-phosphate: step 2/2.</text>
</comment>
<comment type="subcellular location">
    <subcellularLocation>
        <location evidence="1">Cytoplasm</location>
    </subcellularLocation>
</comment>
<comment type="similarity">
    <text evidence="1">Belongs to the DeoC/FbaB aldolase family. DeoC type 1 subfamily.</text>
</comment>
<keyword id="KW-0963">Cytoplasm</keyword>
<keyword id="KW-0456">Lyase</keyword>
<keyword id="KW-0704">Schiff base</keyword>
<name>DEOC1_YERPS</name>
<accession>Q66CP8</accession>
<proteinExistence type="inferred from homology"/>
<gene>
    <name evidence="1" type="primary">deoC1</name>
    <name type="synonym">dra</name>
    <name type="ordered locus">YPTB1354</name>
</gene>
<protein>
    <recommendedName>
        <fullName evidence="1">Deoxyribose-phosphate aldolase 1</fullName>
        <shortName evidence="1">DERA 1</shortName>
        <ecNumber evidence="1">4.1.2.4</ecNumber>
    </recommendedName>
    <alternativeName>
        <fullName evidence="1">2-deoxy-D-ribose 5-phosphate aldolase 1</fullName>
    </alternativeName>
    <alternativeName>
        <fullName evidence="1">Phosphodeoxyriboaldolase 1</fullName>
        <shortName evidence="1">Deoxyriboaldolase 1</shortName>
    </alternativeName>
</protein>